<evidence type="ECO:0000250" key="1">
    <source>
        <dbReference type="UniProtKB" id="Q9UPQ8"/>
    </source>
</evidence>
<evidence type="ECO:0000255" key="2"/>
<evidence type="ECO:0000305" key="3"/>
<comment type="function">
    <text evidence="1">Catalyzes CTP-mediated phosphorylation of dolichol, the terminal step in de novo dolichyl monophosphate (Dol-P) biosynthesis. Dol-P is a lipid carrier essential for the synthesis of N-linked and O-linked oligosaccharides and for GPI anchors.</text>
</comment>
<comment type="catalytic activity">
    <reaction evidence="1">
        <text>a di-trans,poly-cis-dolichol + CTP = a di-trans,poly-cis-dolichyl phosphate + CDP + H(+)</text>
        <dbReference type="Rhea" id="RHEA:13133"/>
        <dbReference type="Rhea" id="RHEA-COMP:19495"/>
        <dbReference type="Rhea" id="RHEA-COMP:19498"/>
        <dbReference type="ChEBI" id="CHEBI:15378"/>
        <dbReference type="ChEBI" id="CHEBI:16091"/>
        <dbReference type="ChEBI" id="CHEBI:37563"/>
        <dbReference type="ChEBI" id="CHEBI:57683"/>
        <dbReference type="ChEBI" id="CHEBI:58069"/>
        <dbReference type="EC" id="2.7.1.108"/>
    </reaction>
    <physiologicalReaction direction="left-to-right" evidence="1">
        <dbReference type="Rhea" id="RHEA:13134"/>
    </physiologicalReaction>
</comment>
<comment type="pathway">
    <text evidence="1">Protein modification; protein glycosylation.</text>
</comment>
<comment type="subcellular location">
    <subcellularLocation>
        <location evidence="1">Endoplasmic reticulum membrane</location>
        <topology evidence="1">Multi-pass membrane protein</topology>
    </subcellularLocation>
</comment>
<comment type="similarity">
    <text evidence="3">Belongs to the polyprenol kinase family.</text>
</comment>
<comment type="sequence caution" evidence="3">
    <conflict type="frameshift">
        <sequence resource="EMBL-CDS" id="AAX46357"/>
    </conflict>
</comment>
<feature type="chain" id="PRO_0000238931" description="Dolichol kinase">
    <location>
        <begin position="1"/>
        <end position="538"/>
    </location>
</feature>
<feature type="topological domain" description="Lumenal" evidence="3">
    <location>
        <begin position="1"/>
        <end position="18"/>
    </location>
</feature>
<feature type="transmembrane region" description="Helical; Name=1" evidence="2">
    <location>
        <begin position="19"/>
        <end position="39"/>
    </location>
</feature>
<feature type="topological domain" description="Cytoplasmic" evidence="3">
    <location>
        <begin position="40"/>
        <end position="74"/>
    </location>
</feature>
<feature type="transmembrane region" description="Helical; Name=2" evidence="2">
    <location>
        <begin position="75"/>
        <end position="95"/>
    </location>
</feature>
<feature type="topological domain" description="Lumenal" evidence="3">
    <location>
        <begin position="96"/>
        <end position="111"/>
    </location>
</feature>
<feature type="transmembrane region" description="Helical; Name=3" evidence="2">
    <location>
        <begin position="112"/>
        <end position="132"/>
    </location>
</feature>
<feature type="topological domain" description="Cytoplasmic" evidence="3">
    <location>
        <begin position="133"/>
        <end position="134"/>
    </location>
</feature>
<feature type="transmembrane region" description="Helical; Name=4" evidence="2">
    <location>
        <begin position="135"/>
        <end position="155"/>
    </location>
</feature>
<feature type="topological domain" description="Lumenal" evidence="3">
    <location>
        <begin position="156"/>
        <end position="163"/>
    </location>
</feature>
<feature type="transmembrane region" description="Helical; Name=5" evidence="2">
    <location>
        <begin position="164"/>
        <end position="184"/>
    </location>
</feature>
<feature type="topological domain" description="Cytoplasmic" evidence="3">
    <location>
        <begin position="185"/>
        <end position="188"/>
    </location>
</feature>
<feature type="transmembrane region" description="Helical; Name=6" evidence="2">
    <location>
        <begin position="189"/>
        <end position="209"/>
    </location>
</feature>
<feature type="topological domain" description="Lumenal" evidence="3">
    <location>
        <begin position="210"/>
        <end position="224"/>
    </location>
</feature>
<feature type="transmembrane region" description="Helical; Name=7" evidence="2">
    <location>
        <begin position="225"/>
        <end position="245"/>
    </location>
</feature>
<feature type="topological domain" description="Cytoplasmic" evidence="3">
    <location>
        <begin position="246"/>
        <end position="254"/>
    </location>
</feature>
<feature type="transmembrane region" description="Helical; Name=8" evidence="2">
    <location>
        <begin position="255"/>
        <end position="275"/>
    </location>
</feature>
<feature type="topological domain" description="Lumenal" evidence="3">
    <location>
        <begin position="276"/>
        <end position="297"/>
    </location>
</feature>
<feature type="transmembrane region" description="Helical; Name=9" evidence="2">
    <location>
        <begin position="298"/>
        <end position="318"/>
    </location>
</feature>
<feature type="topological domain" description="Cytoplasmic" evidence="3">
    <location>
        <begin position="319"/>
        <end position="337"/>
    </location>
</feature>
<feature type="transmembrane region" description="Helical; Name=10" evidence="2">
    <location>
        <begin position="338"/>
        <end position="354"/>
    </location>
</feature>
<feature type="topological domain" description="Lumenal" evidence="3">
    <location>
        <begin position="355"/>
        <end position="359"/>
    </location>
</feature>
<feature type="transmembrane region" description="Helical; Name=11" evidence="2">
    <location>
        <begin position="360"/>
        <end position="380"/>
    </location>
</feature>
<feature type="topological domain" description="Cytoplasmic" evidence="3">
    <location>
        <begin position="381"/>
        <end position="401"/>
    </location>
</feature>
<feature type="transmembrane region" description="Helical; Name=12" evidence="2">
    <location>
        <begin position="402"/>
        <end position="422"/>
    </location>
</feature>
<feature type="topological domain" description="Lumenal" evidence="3">
    <location>
        <begin position="423"/>
        <end position="436"/>
    </location>
</feature>
<feature type="transmembrane region" description="Helical; Name=13" evidence="2">
    <location>
        <begin position="437"/>
        <end position="457"/>
    </location>
</feature>
<feature type="topological domain" description="Cytoplasmic" evidence="1">
    <location>
        <begin position="458"/>
        <end position="472"/>
    </location>
</feature>
<feature type="transmembrane region" description="Helical; Name=14" evidence="2">
    <location>
        <begin position="473"/>
        <end position="493"/>
    </location>
</feature>
<feature type="topological domain" description="Lumenal" evidence="3">
    <location>
        <begin position="494"/>
        <end position="495"/>
    </location>
</feature>
<feature type="transmembrane region" description="Helical; Name=15" evidence="2">
    <location>
        <begin position="496"/>
        <end position="516"/>
    </location>
</feature>
<feature type="topological domain" description="Cytoplasmic" evidence="1">
    <location>
        <begin position="517"/>
        <end position="538"/>
    </location>
</feature>
<feature type="region of interest" description="CTP-binding" evidence="1">
    <location>
        <begin position="459"/>
        <end position="474"/>
    </location>
</feature>
<accession>Q58CR4</accession>
<accession>A0JN90</accession>
<accession>Q58DT7</accession>
<name>DOLK_BOVIN</name>
<sequence>MTRECAPPTPGSGAPLSGSVLAEAAVVFVVVLSIHAAVWDRYSWCAVALAVQAFYVQYKWDRLLQQGSAVFQFRMSANSGLLPASVVMPLLGLVMKERCQAAGNPYFERFGIVVAATGMAVALFSSVLALGITRPVPTNTCVISGLAGGVIIYIMKHSLSVGEVIEVLEALLIFVYLNMILLYLLPRCFTPGEALLVLGGISFMLNQLIKRSLTVVESQGDPLDFFLLVVVVGMVLMGIFFSTLFVFMDSGTWASSIFFHLMTCVLGLGVVLPWLHRLIRRNPLLWLFQFLFQTETRVYLLAYWCLLATVACLVVLYQNAKRSSSESKKHQAPTITRKYFHFIVVATYIPGIILDRPLLYVAATVCLAVFIFLEYVRYFRIKPLGHTLRSLLSLFLDERDSGPLILTHIYLLLGMSLPIWLVPRPCTQKGSLGGARALVPYAGVLAVGVGDTVASIFGSTMGEIRWPGTKKTFEGTMTSIFAQIISVALILIFDSGVDLNYSYAWILGSISTVSLLEAYTTQIDNLLLPLYLLILLMA</sequence>
<keyword id="KW-0256">Endoplasmic reticulum</keyword>
<keyword id="KW-0418">Kinase</keyword>
<keyword id="KW-0443">Lipid metabolism</keyword>
<keyword id="KW-0472">Membrane</keyword>
<keyword id="KW-1185">Reference proteome</keyword>
<keyword id="KW-0808">Transferase</keyword>
<keyword id="KW-0812">Transmembrane</keyword>
<keyword id="KW-1133">Transmembrane helix</keyword>
<gene>
    <name type="primary">DOLK</name>
    <name type="synonym">TMEM15</name>
</gene>
<proteinExistence type="evidence at transcript level"/>
<protein>
    <recommendedName>
        <fullName>Dolichol kinase</fullName>
        <ecNumber evidence="1">2.7.1.108</ecNumber>
    </recommendedName>
    <alternativeName>
        <fullName>Transmembrane protein 15</fullName>
    </alternativeName>
</protein>
<reference key="1">
    <citation type="journal article" date="2005" name="BMC Genomics">
        <title>Characterization of 954 bovine full-CDS cDNA sequences.</title>
        <authorList>
            <person name="Harhay G.P."/>
            <person name="Sonstegard T.S."/>
            <person name="Keele J.W."/>
            <person name="Heaton M.P."/>
            <person name="Clawson M.L."/>
            <person name="Snelling W.M."/>
            <person name="Wiedmann R.T."/>
            <person name="Van Tassell C.P."/>
            <person name="Smith T.P.L."/>
        </authorList>
    </citation>
    <scope>NUCLEOTIDE SEQUENCE [LARGE SCALE MRNA]</scope>
</reference>
<reference key="2">
    <citation type="submission" date="2006-10" db="EMBL/GenBank/DDBJ databases">
        <authorList>
            <consortium name="NIH - Mammalian Gene Collection (MGC) project"/>
        </authorList>
    </citation>
    <scope>NUCLEOTIDE SEQUENCE [LARGE SCALE MRNA]</scope>
    <source>
        <strain>Hereford</strain>
        <tissue>Fetal brain</tissue>
    </source>
</reference>
<dbReference type="EC" id="2.7.1.108" evidence="1"/>
<dbReference type="EMBL" id="BT021510">
    <property type="protein sequence ID" value="AAX46357.1"/>
    <property type="status" value="ALT_FRAME"/>
    <property type="molecule type" value="mRNA"/>
</dbReference>
<dbReference type="EMBL" id="BT021883">
    <property type="protein sequence ID" value="AAX46730.1"/>
    <property type="molecule type" value="mRNA"/>
</dbReference>
<dbReference type="EMBL" id="BC126569">
    <property type="protein sequence ID" value="AAI26570.1"/>
    <property type="molecule type" value="mRNA"/>
</dbReference>
<dbReference type="RefSeq" id="NP_001030442.2">
    <property type="nucleotide sequence ID" value="NM_001035365.3"/>
</dbReference>
<dbReference type="FunCoup" id="Q58CR4">
    <property type="interactions" value="1801"/>
</dbReference>
<dbReference type="STRING" id="9913.ENSBTAP00000054607"/>
<dbReference type="PaxDb" id="9913-ENSBTAP00000054607"/>
<dbReference type="Ensembl" id="ENSBTAT00000014016.7">
    <property type="protein sequence ID" value="ENSBTAP00000054607.1"/>
    <property type="gene ID" value="ENSBTAG00000010601.7"/>
</dbReference>
<dbReference type="Ensembl" id="ENSBTAT00000101751.1">
    <property type="protein sequence ID" value="ENSBTAP00000096537.1"/>
    <property type="gene ID" value="ENSBTAG00000010601.7"/>
</dbReference>
<dbReference type="GeneID" id="526844"/>
<dbReference type="KEGG" id="bta:526844"/>
<dbReference type="CTD" id="22845"/>
<dbReference type="VEuPathDB" id="HostDB:ENSBTAG00000010601"/>
<dbReference type="VGNC" id="VGNC:28170">
    <property type="gene designation" value="DOLK"/>
</dbReference>
<dbReference type="eggNOG" id="KOG2468">
    <property type="taxonomic scope" value="Eukaryota"/>
</dbReference>
<dbReference type="GeneTree" id="ENSGT00390000004067"/>
<dbReference type="HOGENOM" id="CLU_027611_2_1_1"/>
<dbReference type="InParanoid" id="Q58CR4"/>
<dbReference type="OMA" id="EIHWPGT"/>
<dbReference type="OrthoDB" id="377083at2759"/>
<dbReference type="TreeFam" id="TF323379"/>
<dbReference type="Reactome" id="R-BTA-446199">
    <property type="pathway name" value="Synthesis of Dolichyl-phosphate"/>
</dbReference>
<dbReference type="UniPathway" id="UPA00378"/>
<dbReference type="Proteomes" id="UP000009136">
    <property type="component" value="Chromosome 11"/>
</dbReference>
<dbReference type="Bgee" id="ENSBTAG00000010601">
    <property type="expression patterns" value="Expressed in cortex of kidney and 103 other cell types or tissues"/>
</dbReference>
<dbReference type="GO" id="GO:0005789">
    <property type="term" value="C:endoplasmic reticulum membrane"/>
    <property type="evidence" value="ECO:0000250"/>
    <property type="project" value="UniProtKB"/>
</dbReference>
<dbReference type="GO" id="GO:0004168">
    <property type="term" value="F:dolichol kinase activity"/>
    <property type="evidence" value="ECO:0000250"/>
    <property type="project" value="UniProtKB"/>
</dbReference>
<dbReference type="GO" id="GO:0019348">
    <property type="term" value="P:dolichol metabolic process"/>
    <property type="evidence" value="ECO:0007669"/>
    <property type="project" value="Ensembl"/>
</dbReference>
<dbReference type="GO" id="GO:0180047">
    <property type="term" value="P:dolichol phosphate mannose biosynthetic process"/>
    <property type="evidence" value="ECO:0000250"/>
    <property type="project" value="UniProtKB"/>
</dbReference>
<dbReference type="GO" id="GO:0043048">
    <property type="term" value="P:dolichyl monophosphate biosynthetic process"/>
    <property type="evidence" value="ECO:0000250"/>
    <property type="project" value="UniProtKB"/>
</dbReference>
<dbReference type="GO" id="GO:0035268">
    <property type="term" value="P:protein mannosylation"/>
    <property type="evidence" value="ECO:0000250"/>
    <property type="project" value="UniProtKB"/>
</dbReference>
<dbReference type="GO" id="GO:0006487">
    <property type="term" value="P:protein N-linked glycosylation"/>
    <property type="evidence" value="ECO:0000250"/>
    <property type="project" value="UniProtKB"/>
</dbReference>
<dbReference type="InterPro" id="IPR032974">
    <property type="entry name" value="Polypren_kinase"/>
</dbReference>
<dbReference type="PANTHER" id="PTHR13205:SF15">
    <property type="entry name" value="DOLICHOL KINASE"/>
    <property type="match status" value="1"/>
</dbReference>
<dbReference type="PANTHER" id="PTHR13205">
    <property type="entry name" value="TRANSMEMBRANE PROTEIN 15-RELATED"/>
    <property type="match status" value="1"/>
</dbReference>
<organism>
    <name type="scientific">Bos taurus</name>
    <name type="common">Bovine</name>
    <dbReference type="NCBI Taxonomy" id="9913"/>
    <lineage>
        <taxon>Eukaryota</taxon>
        <taxon>Metazoa</taxon>
        <taxon>Chordata</taxon>
        <taxon>Craniata</taxon>
        <taxon>Vertebrata</taxon>
        <taxon>Euteleostomi</taxon>
        <taxon>Mammalia</taxon>
        <taxon>Eutheria</taxon>
        <taxon>Laurasiatheria</taxon>
        <taxon>Artiodactyla</taxon>
        <taxon>Ruminantia</taxon>
        <taxon>Pecora</taxon>
        <taxon>Bovidae</taxon>
        <taxon>Bovinae</taxon>
        <taxon>Bos</taxon>
    </lineage>
</organism>